<keyword id="KW-1003">Cell membrane</keyword>
<keyword id="KW-0472">Membrane</keyword>
<keyword id="KW-1185">Reference proteome</keyword>
<keyword id="KW-0812">Transmembrane</keyword>
<keyword id="KW-1133">Transmembrane helix</keyword>
<keyword id="KW-0813">Transport</keyword>
<name>Y570_CORDI</name>
<gene>
    <name type="ordered locus">DIP0570</name>
</gene>
<protein>
    <recommendedName>
        <fullName>Uncharacterized transporter DIP0570</fullName>
    </recommendedName>
</protein>
<accession>Q6NJ43</accession>
<comment type="subcellular location">
    <subcellularLocation>
        <location evidence="3">Cell membrane</location>
        <topology evidence="3">Multi-pass membrane protein</topology>
    </subcellularLocation>
</comment>
<comment type="similarity">
    <text evidence="3">Belongs to the AAE transporter (TC 2.A.81) family.</text>
</comment>
<organism>
    <name type="scientific">Corynebacterium diphtheriae (strain ATCC 700971 / NCTC 13129 / Biotype gravis)</name>
    <dbReference type="NCBI Taxonomy" id="257309"/>
    <lineage>
        <taxon>Bacteria</taxon>
        <taxon>Bacillati</taxon>
        <taxon>Actinomycetota</taxon>
        <taxon>Actinomycetes</taxon>
        <taxon>Mycobacteriales</taxon>
        <taxon>Corynebacteriaceae</taxon>
        <taxon>Corynebacterium</taxon>
    </lineage>
</organism>
<evidence type="ECO:0000255" key="1"/>
<evidence type="ECO:0000255" key="2">
    <source>
        <dbReference type="PROSITE-ProRule" id="PRU00544"/>
    </source>
</evidence>
<evidence type="ECO:0000305" key="3"/>
<feature type="chain" id="PRO_0000208765" description="Uncharacterized transporter DIP0570">
    <location>
        <begin position="1"/>
        <end position="561"/>
    </location>
</feature>
<feature type="transmembrane region" description="Helical" evidence="1">
    <location>
        <begin position="27"/>
        <end position="49"/>
    </location>
</feature>
<feature type="transmembrane region" description="Helical" evidence="1">
    <location>
        <begin position="54"/>
        <end position="71"/>
    </location>
</feature>
<feature type="transmembrane region" description="Helical" evidence="1">
    <location>
        <begin position="83"/>
        <end position="105"/>
    </location>
</feature>
<feature type="transmembrane region" description="Helical" evidence="1">
    <location>
        <begin position="115"/>
        <end position="137"/>
    </location>
</feature>
<feature type="transmembrane region" description="Helical" evidence="1">
    <location>
        <begin position="142"/>
        <end position="162"/>
    </location>
</feature>
<feature type="transmembrane region" description="Helical" evidence="1">
    <location>
        <begin position="177"/>
        <end position="199"/>
    </location>
</feature>
<feature type="transmembrane region" description="Helical" evidence="1">
    <location>
        <begin position="383"/>
        <end position="405"/>
    </location>
</feature>
<feature type="transmembrane region" description="Helical" evidence="1">
    <location>
        <begin position="409"/>
        <end position="428"/>
    </location>
</feature>
<feature type="transmembrane region" description="Helical" evidence="1">
    <location>
        <begin position="441"/>
        <end position="463"/>
    </location>
</feature>
<feature type="transmembrane region" description="Helical" evidence="1">
    <location>
        <begin position="478"/>
        <end position="500"/>
    </location>
</feature>
<feature type="domain" description="RCK C-terminal" evidence="2">
    <location>
        <begin position="292"/>
        <end position="373"/>
    </location>
</feature>
<sequence>MQIRVPQRNRGRTFPHRSSHRRTPIHILEFLAAQPLLTLALILAVGLLIGKIRFFGISLGAAAVLFVALALSTVDPALQLPPLVYQLGLAMFVYAIGLSAGSEFFAEFRHRGWKLTLFMIGLLMLMMAVAYGIIKLFGLDEIIGAGMFAGALSSTPGMAAMVEMLEGIDDSVASEPVVGYSLAYPGAVIGSILVAAIGAKLMKVNHAADAAEEGLVSDPLEWTGVRIGPGINGTIAQLPTLAGEEIIATRVVHSKTFHSLAAPNDRLHEGMVLVIHGTPDALERAIAKVGKQQDVPIEDTDLVYSRFTVSSKAVVGRKISDLDTVRSGFIISRLRRGDADVVPEPDDVLHYSDRVRVIAPANRMSEVRRFLGDSERSLADVDLMPFAFGLVIGLAIGVIPIPLPGGNTLSLGFGGGPIVAGLILGALNRTGPIHWQMPYHASRTISTFGLAIFLAGVGTSAGVGFRQALTDPASLTVIAGGFIVTISSALVCALVCMPLFKLKWDEAMGVAAGCTTNPAIISYLNGQTGTELATRGYATVYPTAMIGKIIASQMLLLALIA</sequence>
<proteinExistence type="inferred from homology"/>
<reference key="1">
    <citation type="journal article" date="2003" name="Nucleic Acids Res.">
        <title>The complete genome sequence and analysis of Corynebacterium diphtheriae NCTC13129.</title>
        <authorList>
            <person name="Cerdeno-Tarraga A.-M."/>
            <person name="Efstratiou A."/>
            <person name="Dover L.G."/>
            <person name="Holden M.T.G."/>
            <person name="Pallen M.J."/>
            <person name="Bentley S.D."/>
            <person name="Besra G.S."/>
            <person name="Churcher C.M."/>
            <person name="James K.D."/>
            <person name="De Zoysa A."/>
            <person name="Chillingworth T."/>
            <person name="Cronin A."/>
            <person name="Dowd L."/>
            <person name="Feltwell T."/>
            <person name="Hamlin N."/>
            <person name="Holroyd S."/>
            <person name="Jagels K."/>
            <person name="Moule S."/>
            <person name="Quail M.A."/>
            <person name="Rabbinowitsch E."/>
            <person name="Rutherford K.M."/>
            <person name="Thomson N.R."/>
            <person name="Unwin L."/>
            <person name="Whitehead S."/>
            <person name="Barrell B.G."/>
            <person name="Parkhill J."/>
        </authorList>
    </citation>
    <scope>NUCLEOTIDE SEQUENCE [LARGE SCALE GENOMIC DNA]</scope>
    <source>
        <strain>ATCC 700971 / NCTC 13129 / Biotype gravis</strain>
    </source>
</reference>
<dbReference type="EMBL" id="BX248355">
    <property type="protein sequence ID" value="CAE49082.1"/>
    <property type="molecule type" value="Genomic_DNA"/>
</dbReference>
<dbReference type="SMR" id="Q6NJ43"/>
<dbReference type="STRING" id="257309.DIP0570"/>
<dbReference type="KEGG" id="cdi:DIP0570"/>
<dbReference type="HOGENOM" id="CLU_035023_3_0_11"/>
<dbReference type="Proteomes" id="UP000002198">
    <property type="component" value="Chromosome"/>
</dbReference>
<dbReference type="GO" id="GO:0005886">
    <property type="term" value="C:plasma membrane"/>
    <property type="evidence" value="ECO:0007669"/>
    <property type="project" value="UniProtKB-SubCell"/>
</dbReference>
<dbReference type="GO" id="GO:0008324">
    <property type="term" value="F:monoatomic cation transmembrane transporter activity"/>
    <property type="evidence" value="ECO:0007669"/>
    <property type="project" value="InterPro"/>
</dbReference>
<dbReference type="GO" id="GO:0005975">
    <property type="term" value="P:carbohydrate metabolic process"/>
    <property type="evidence" value="ECO:0007669"/>
    <property type="project" value="InterPro"/>
</dbReference>
<dbReference type="GO" id="GO:0006813">
    <property type="term" value="P:potassium ion transport"/>
    <property type="evidence" value="ECO:0007669"/>
    <property type="project" value="InterPro"/>
</dbReference>
<dbReference type="Gene3D" id="3.30.70.1450">
    <property type="entry name" value="Regulator of K+ conductance, C-terminal domain"/>
    <property type="match status" value="1"/>
</dbReference>
<dbReference type="InterPro" id="IPR050144">
    <property type="entry name" value="AAE_transporter"/>
</dbReference>
<dbReference type="InterPro" id="IPR006037">
    <property type="entry name" value="RCK_C"/>
</dbReference>
<dbReference type="InterPro" id="IPR036721">
    <property type="entry name" value="RCK_C_sf"/>
</dbReference>
<dbReference type="InterPro" id="IPR018225">
    <property type="entry name" value="Transaldolase_AS"/>
</dbReference>
<dbReference type="InterPro" id="IPR006512">
    <property type="entry name" value="YidE_YbjL"/>
</dbReference>
<dbReference type="NCBIfam" id="TIGR01625">
    <property type="entry name" value="YidE_YbjL_dupl"/>
    <property type="match status" value="2"/>
</dbReference>
<dbReference type="PANTHER" id="PTHR30445">
    <property type="entry name" value="K(+)_H(+) ANTIPORTER SUBUNIT KHTT"/>
    <property type="match status" value="1"/>
</dbReference>
<dbReference type="PANTHER" id="PTHR30445:SF3">
    <property type="entry name" value="TRANSPORT PROTEIN YIDE-RELATED"/>
    <property type="match status" value="1"/>
</dbReference>
<dbReference type="Pfam" id="PF06826">
    <property type="entry name" value="Asp-Al_Ex"/>
    <property type="match status" value="2"/>
</dbReference>
<dbReference type="Pfam" id="PF02080">
    <property type="entry name" value="TrkA_C"/>
    <property type="match status" value="1"/>
</dbReference>
<dbReference type="SUPFAM" id="SSF116726">
    <property type="entry name" value="TrkA C-terminal domain-like"/>
    <property type="match status" value="1"/>
</dbReference>
<dbReference type="PROSITE" id="PS51202">
    <property type="entry name" value="RCK_C"/>
    <property type="match status" value="1"/>
</dbReference>